<evidence type="ECO:0000250" key="1"/>
<evidence type="ECO:0000250" key="2">
    <source>
        <dbReference type="UniProtKB" id="P21291"/>
    </source>
</evidence>
<evidence type="ECO:0000250" key="3">
    <source>
        <dbReference type="UniProtKB" id="P67966"/>
    </source>
</evidence>
<evidence type="ECO:0000255" key="4"/>
<evidence type="ECO:0000255" key="5">
    <source>
        <dbReference type="PROSITE-ProRule" id="PRU00125"/>
    </source>
</evidence>
<evidence type="ECO:0000305" key="6"/>
<name>CSRP1_COTJA</name>
<sequence length="192" mass="20385">MPNWGGGKKCGVCQKAVYFAEEVQCEGSSFHKSCFLCMVCKKNLDSTTVAVHGDEIYCKSCYGKKYGPKGYGYGMGAGTLSTDKGESLGIKYEEGQSHRPTNPNASRMAQKVGGSDGCPRCGQAVYAAEKVIGAGKSWHKSCFRCAKCGKSLESTTLADKDGEIYCKGCYAKNFGPKGFGFGQGAGALIHSQ</sequence>
<dbReference type="EMBL" id="Z28333">
    <property type="protein sequence ID" value="CAA82187.1"/>
    <property type="molecule type" value="mRNA"/>
</dbReference>
<dbReference type="PIR" id="S38879">
    <property type="entry name" value="S38879"/>
</dbReference>
<dbReference type="RefSeq" id="XP_015740342.1">
    <property type="nucleotide sequence ID" value="XM_015884856.1"/>
</dbReference>
<dbReference type="RefSeq" id="XP_015740344.1">
    <property type="nucleotide sequence ID" value="XM_015884858.1"/>
</dbReference>
<dbReference type="SMR" id="P67967"/>
<dbReference type="Ensembl" id="ENSCJPT00005013423.1">
    <property type="protein sequence ID" value="ENSCJPP00005008922.1"/>
    <property type="gene ID" value="ENSCJPG00005007905.1"/>
</dbReference>
<dbReference type="GeneID" id="107324658"/>
<dbReference type="KEGG" id="cjo:107324658"/>
<dbReference type="CTD" id="1465"/>
<dbReference type="GeneTree" id="ENSGT00940000156777"/>
<dbReference type="OrthoDB" id="8062037at2759"/>
<dbReference type="Proteomes" id="UP000694412">
    <property type="component" value="Chromosome 26"/>
</dbReference>
<dbReference type="GO" id="GO:0031252">
    <property type="term" value="C:cell leading edge"/>
    <property type="evidence" value="ECO:0000250"/>
    <property type="project" value="AgBase"/>
</dbReference>
<dbReference type="GO" id="GO:0005737">
    <property type="term" value="C:cytoplasm"/>
    <property type="evidence" value="ECO:0000250"/>
    <property type="project" value="AgBase"/>
</dbReference>
<dbReference type="GO" id="GO:0005925">
    <property type="term" value="C:focal adhesion"/>
    <property type="evidence" value="ECO:0000250"/>
    <property type="project" value="AgBase"/>
</dbReference>
<dbReference type="GO" id="GO:0005634">
    <property type="term" value="C:nucleus"/>
    <property type="evidence" value="ECO:0007669"/>
    <property type="project" value="UniProtKB-SubCell"/>
</dbReference>
<dbReference type="GO" id="GO:0001725">
    <property type="term" value="C:stress fiber"/>
    <property type="evidence" value="ECO:0000250"/>
    <property type="project" value="AgBase"/>
</dbReference>
<dbReference type="GO" id="GO:0030018">
    <property type="term" value="C:Z disc"/>
    <property type="evidence" value="ECO:0007669"/>
    <property type="project" value="TreeGrafter"/>
</dbReference>
<dbReference type="GO" id="GO:0042805">
    <property type="term" value="F:actinin binding"/>
    <property type="evidence" value="ECO:0007669"/>
    <property type="project" value="TreeGrafter"/>
</dbReference>
<dbReference type="GO" id="GO:0046872">
    <property type="term" value="F:metal ion binding"/>
    <property type="evidence" value="ECO:0007669"/>
    <property type="project" value="UniProtKB-KW"/>
</dbReference>
<dbReference type="GO" id="GO:0008307">
    <property type="term" value="F:structural constituent of muscle"/>
    <property type="evidence" value="ECO:0007669"/>
    <property type="project" value="TreeGrafter"/>
</dbReference>
<dbReference type="GO" id="GO:0060537">
    <property type="term" value="P:muscle tissue development"/>
    <property type="evidence" value="ECO:0007669"/>
    <property type="project" value="TreeGrafter"/>
</dbReference>
<dbReference type="GO" id="GO:0045214">
    <property type="term" value="P:sarcomere organization"/>
    <property type="evidence" value="ECO:0007669"/>
    <property type="project" value="TreeGrafter"/>
</dbReference>
<dbReference type="CDD" id="cd09479">
    <property type="entry name" value="LIM1_CRP1"/>
    <property type="match status" value="1"/>
</dbReference>
<dbReference type="CDD" id="cd09403">
    <property type="entry name" value="LIM2_CRP"/>
    <property type="match status" value="1"/>
</dbReference>
<dbReference type="FunFam" id="2.10.110.10:FF:000001">
    <property type="entry name" value="Cysteine and glycine-rich protein 1"/>
    <property type="match status" value="2"/>
</dbReference>
<dbReference type="Gene3D" id="2.10.110.10">
    <property type="entry name" value="Cysteine Rich Protein"/>
    <property type="match status" value="2"/>
</dbReference>
<dbReference type="InterPro" id="IPR001781">
    <property type="entry name" value="Znf_LIM"/>
</dbReference>
<dbReference type="PANTHER" id="PTHR24215:SF23">
    <property type="entry name" value="CYSTEINE AND GLYCINE-RICH PROTEIN 1"/>
    <property type="match status" value="1"/>
</dbReference>
<dbReference type="PANTHER" id="PTHR24215">
    <property type="entry name" value="RHO-GTPASE-ACTIVATING PROTEIN LRG1"/>
    <property type="match status" value="1"/>
</dbReference>
<dbReference type="Pfam" id="PF00412">
    <property type="entry name" value="LIM"/>
    <property type="match status" value="2"/>
</dbReference>
<dbReference type="SMART" id="SM00132">
    <property type="entry name" value="LIM"/>
    <property type="match status" value="2"/>
</dbReference>
<dbReference type="SUPFAM" id="SSF57716">
    <property type="entry name" value="Glucocorticoid receptor-like (DNA-binding domain)"/>
    <property type="match status" value="4"/>
</dbReference>
<dbReference type="PROSITE" id="PS00478">
    <property type="entry name" value="LIM_DOMAIN_1"/>
    <property type="match status" value="2"/>
</dbReference>
<dbReference type="PROSITE" id="PS50023">
    <property type="entry name" value="LIM_DOMAIN_2"/>
    <property type="match status" value="2"/>
</dbReference>
<feature type="initiator methionine" description="Removed" evidence="1">
    <location>
        <position position="1"/>
    </location>
</feature>
<feature type="chain" id="PRO_0000075720" description="Cysteine and glycine-rich protein 1">
    <location>
        <begin position="2"/>
        <end position="192"/>
    </location>
</feature>
<feature type="domain" description="LIM zinc-binding 1" evidence="5">
    <location>
        <begin position="10"/>
        <end position="61"/>
    </location>
</feature>
<feature type="domain" description="LIM zinc-binding 2" evidence="5">
    <location>
        <begin position="118"/>
        <end position="169"/>
    </location>
</feature>
<feature type="short sequence motif" description="Nuclear localization signal" evidence="4">
    <location>
        <begin position="64"/>
        <end position="69"/>
    </location>
</feature>
<reference key="1">
    <citation type="journal article" date="1995" name="J. Biol. Chem.">
        <title>The cysteine-rich protein family of highly related LIM domain proteins.</title>
        <authorList>
            <person name="Weiskirchen R."/>
            <person name="Pino J.D."/>
            <person name="Macalma T."/>
            <person name="Bister K."/>
            <person name="Beckerle M.C."/>
        </authorList>
    </citation>
    <scope>NUCLEOTIDE SEQUENCE [MRNA]</scope>
    <source>
        <tissue>Embryonic fibroblast</tissue>
    </source>
</reference>
<gene>
    <name type="primary">CSRP1</name>
    <name type="synonym">CSRP</name>
</gene>
<keyword id="KW-0963">Cytoplasm</keyword>
<keyword id="KW-0206">Cytoskeleton</keyword>
<keyword id="KW-0440">LIM domain</keyword>
<keyword id="KW-0479">Metal-binding</keyword>
<keyword id="KW-0539">Nucleus</keyword>
<keyword id="KW-1185">Reference proteome</keyword>
<keyword id="KW-0677">Repeat</keyword>
<keyword id="KW-0862">Zinc</keyword>
<organism>
    <name type="scientific">Coturnix japonica</name>
    <name type="common">Japanese quail</name>
    <name type="synonym">Coturnix coturnix japonica</name>
    <dbReference type="NCBI Taxonomy" id="93934"/>
    <lineage>
        <taxon>Eukaryota</taxon>
        <taxon>Metazoa</taxon>
        <taxon>Chordata</taxon>
        <taxon>Craniata</taxon>
        <taxon>Vertebrata</taxon>
        <taxon>Euteleostomi</taxon>
        <taxon>Archelosauria</taxon>
        <taxon>Archosauria</taxon>
        <taxon>Dinosauria</taxon>
        <taxon>Saurischia</taxon>
        <taxon>Theropoda</taxon>
        <taxon>Coelurosauria</taxon>
        <taxon>Aves</taxon>
        <taxon>Neognathae</taxon>
        <taxon>Galloanserae</taxon>
        <taxon>Galliformes</taxon>
        <taxon>Phasianidae</taxon>
        <taxon>Perdicinae</taxon>
        <taxon>Coturnix</taxon>
    </lineage>
</organism>
<accession>P67967</accession>
<accession>P32965</accession>
<comment type="function">
    <text evidence="3">Heat stable protein, that interacts with zyxin/ZYX. May be a component of a signal transduction pathway that mediates adhesion-stimulated changes in gene expression.</text>
</comment>
<comment type="subunit">
    <text evidence="3">Interacts with ZYX.</text>
</comment>
<comment type="subcellular location">
    <subcellularLocation>
        <location evidence="2">Nucleus</location>
    </subcellularLocation>
    <subcellularLocation>
        <location evidence="3">Cytoplasm</location>
    </subcellularLocation>
    <subcellularLocation>
        <location evidence="3">Cytoplasm</location>
        <location evidence="3">Cytoskeleton</location>
    </subcellularLocation>
    <text evidence="3">Associates with the actin cytoskeleton.</text>
</comment>
<comment type="domain">
    <text evidence="6">Glycine-rich repeats mediate the association with the actin cytoskeleton.</text>
</comment>
<proteinExistence type="evidence at transcript level"/>
<protein>
    <recommendedName>
        <fullName>Cysteine and glycine-rich protein 1</fullName>
    </recommendedName>
    <alternativeName>
        <fullName>Cysteine-rich protein 1</fullName>
        <shortName>CRP</shortName>
        <shortName>CRP1</shortName>
    </alternativeName>
</protein>